<reference key="1">
    <citation type="journal article" date="2005" name="Science">
        <title>Life at depth: Photobacterium profundum genome sequence and expression analysis.</title>
        <authorList>
            <person name="Vezzi A."/>
            <person name="Campanaro S."/>
            <person name="D'Angelo M."/>
            <person name="Simonato F."/>
            <person name="Vitulo N."/>
            <person name="Lauro F.M."/>
            <person name="Cestaro A."/>
            <person name="Malacrida G."/>
            <person name="Simionati B."/>
            <person name="Cannata N."/>
            <person name="Romualdi C."/>
            <person name="Bartlett D.H."/>
            <person name="Valle G."/>
        </authorList>
    </citation>
    <scope>NUCLEOTIDE SEQUENCE [LARGE SCALE GENOMIC DNA]</scope>
    <source>
        <strain>ATCC BAA-1253 / SS9</strain>
    </source>
</reference>
<comment type="subunit">
    <text evidence="1">Part of the 50S ribosomal subunit.</text>
</comment>
<comment type="similarity">
    <text evidence="1">Belongs to the universal ribosomal protein uL30 family.</text>
</comment>
<comment type="sequence caution" evidence="2">
    <conflict type="erroneous initiation">
        <sequence resource="EMBL-CDS" id="CAG18777"/>
    </conflict>
</comment>
<dbReference type="EMBL" id="CR378663">
    <property type="protein sequence ID" value="CAG18777.1"/>
    <property type="status" value="ALT_INIT"/>
    <property type="molecule type" value="Genomic_DNA"/>
</dbReference>
<dbReference type="RefSeq" id="WP_006232357.1">
    <property type="nucleotide sequence ID" value="NC_006370.1"/>
</dbReference>
<dbReference type="SMR" id="Q6LV98"/>
<dbReference type="STRING" id="298386.PBPRA0338"/>
<dbReference type="KEGG" id="ppr:PBPRA0338"/>
<dbReference type="eggNOG" id="COG1841">
    <property type="taxonomic scope" value="Bacteria"/>
</dbReference>
<dbReference type="HOGENOM" id="CLU_131047_1_4_6"/>
<dbReference type="Proteomes" id="UP000000593">
    <property type="component" value="Chromosome 1"/>
</dbReference>
<dbReference type="GO" id="GO:0022625">
    <property type="term" value="C:cytosolic large ribosomal subunit"/>
    <property type="evidence" value="ECO:0007669"/>
    <property type="project" value="TreeGrafter"/>
</dbReference>
<dbReference type="GO" id="GO:0003735">
    <property type="term" value="F:structural constituent of ribosome"/>
    <property type="evidence" value="ECO:0007669"/>
    <property type="project" value="InterPro"/>
</dbReference>
<dbReference type="GO" id="GO:0006412">
    <property type="term" value="P:translation"/>
    <property type="evidence" value="ECO:0007669"/>
    <property type="project" value="UniProtKB-UniRule"/>
</dbReference>
<dbReference type="CDD" id="cd01658">
    <property type="entry name" value="Ribosomal_L30"/>
    <property type="match status" value="1"/>
</dbReference>
<dbReference type="FunFam" id="3.30.1390.20:FF:000001">
    <property type="entry name" value="50S ribosomal protein L30"/>
    <property type="match status" value="1"/>
</dbReference>
<dbReference type="Gene3D" id="3.30.1390.20">
    <property type="entry name" value="Ribosomal protein L30, ferredoxin-like fold domain"/>
    <property type="match status" value="1"/>
</dbReference>
<dbReference type="HAMAP" id="MF_01371_B">
    <property type="entry name" value="Ribosomal_uL30_B"/>
    <property type="match status" value="1"/>
</dbReference>
<dbReference type="InterPro" id="IPR036919">
    <property type="entry name" value="Ribo_uL30_ferredoxin-like_sf"/>
</dbReference>
<dbReference type="InterPro" id="IPR005996">
    <property type="entry name" value="Ribosomal_uL30_bac-type"/>
</dbReference>
<dbReference type="InterPro" id="IPR016082">
    <property type="entry name" value="Ribosomal_uL30_ferredoxin-like"/>
</dbReference>
<dbReference type="NCBIfam" id="TIGR01308">
    <property type="entry name" value="rpmD_bact"/>
    <property type="match status" value="1"/>
</dbReference>
<dbReference type="PANTHER" id="PTHR15892:SF2">
    <property type="entry name" value="LARGE RIBOSOMAL SUBUNIT PROTEIN UL30M"/>
    <property type="match status" value="1"/>
</dbReference>
<dbReference type="PANTHER" id="PTHR15892">
    <property type="entry name" value="MITOCHONDRIAL RIBOSOMAL PROTEIN L30"/>
    <property type="match status" value="1"/>
</dbReference>
<dbReference type="Pfam" id="PF00327">
    <property type="entry name" value="Ribosomal_L30"/>
    <property type="match status" value="1"/>
</dbReference>
<dbReference type="PIRSF" id="PIRSF002211">
    <property type="entry name" value="Ribosomal_L30_bac-type"/>
    <property type="match status" value="1"/>
</dbReference>
<dbReference type="SUPFAM" id="SSF55129">
    <property type="entry name" value="Ribosomal protein L30p/L7e"/>
    <property type="match status" value="1"/>
</dbReference>
<gene>
    <name evidence="1" type="primary">rpmD</name>
    <name type="ordered locus">PBPRA0338</name>
</gene>
<evidence type="ECO:0000255" key="1">
    <source>
        <dbReference type="HAMAP-Rule" id="MF_01371"/>
    </source>
</evidence>
<evidence type="ECO:0000305" key="2"/>
<keyword id="KW-1185">Reference proteome</keyword>
<keyword id="KW-0687">Ribonucleoprotein</keyword>
<keyword id="KW-0689">Ribosomal protein</keyword>
<protein>
    <recommendedName>
        <fullName evidence="1">Large ribosomal subunit protein uL30</fullName>
    </recommendedName>
    <alternativeName>
        <fullName evidence="2">50S ribosomal protein L30</fullName>
    </alternativeName>
</protein>
<name>RL30_PHOPR</name>
<accession>Q6LV98</accession>
<organism>
    <name type="scientific">Photobacterium profundum (strain SS9)</name>
    <dbReference type="NCBI Taxonomy" id="298386"/>
    <lineage>
        <taxon>Bacteria</taxon>
        <taxon>Pseudomonadati</taxon>
        <taxon>Pseudomonadota</taxon>
        <taxon>Gammaproteobacteria</taxon>
        <taxon>Vibrionales</taxon>
        <taxon>Vibrionaceae</taxon>
        <taxon>Photobacterium</taxon>
    </lineage>
</organism>
<sequence length="59" mass="6661">MANTIKVTQTKSSIGRLPKHVACLRGLGLRRINHTVELEDTACVRGMINKVHYMVKIEE</sequence>
<feature type="chain" id="PRO_0000273820" description="Large ribosomal subunit protein uL30">
    <location>
        <begin position="1"/>
        <end position="59"/>
    </location>
</feature>
<proteinExistence type="inferred from homology"/>